<keyword id="KW-0903">Direct protein sequencing</keyword>
<keyword id="KW-0349">Heme</keyword>
<keyword id="KW-0408">Iron</keyword>
<keyword id="KW-0479">Metal-binding</keyword>
<keyword id="KW-0561">Oxygen transport</keyword>
<keyword id="KW-0813">Transport</keyword>
<dbReference type="EMBL" id="AF067566">
    <property type="protein sequence ID" value="AAC41384.1"/>
    <property type="molecule type" value="mRNA"/>
</dbReference>
<dbReference type="PIR" id="S16370">
    <property type="entry name" value="S16370"/>
</dbReference>
<dbReference type="SMR" id="P23017"/>
<dbReference type="GO" id="GO:0072562">
    <property type="term" value="C:blood microparticle"/>
    <property type="evidence" value="ECO:0007669"/>
    <property type="project" value="TreeGrafter"/>
</dbReference>
<dbReference type="GO" id="GO:0031838">
    <property type="term" value="C:haptoglobin-hemoglobin complex"/>
    <property type="evidence" value="ECO:0007669"/>
    <property type="project" value="TreeGrafter"/>
</dbReference>
<dbReference type="GO" id="GO:0005833">
    <property type="term" value="C:hemoglobin complex"/>
    <property type="evidence" value="ECO:0007669"/>
    <property type="project" value="InterPro"/>
</dbReference>
<dbReference type="GO" id="GO:0031720">
    <property type="term" value="F:haptoglobin binding"/>
    <property type="evidence" value="ECO:0007669"/>
    <property type="project" value="TreeGrafter"/>
</dbReference>
<dbReference type="GO" id="GO:0020037">
    <property type="term" value="F:heme binding"/>
    <property type="evidence" value="ECO:0007669"/>
    <property type="project" value="InterPro"/>
</dbReference>
<dbReference type="GO" id="GO:0046872">
    <property type="term" value="F:metal ion binding"/>
    <property type="evidence" value="ECO:0007669"/>
    <property type="project" value="UniProtKB-KW"/>
</dbReference>
<dbReference type="GO" id="GO:0043177">
    <property type="term" value="F:organic acid binding"/>
    <property type="evidence" value="ECO:0007669"/>
    <property type="project" value="TreeGrafter"/>
</dbReference>
<dbReference type="GO" id="GO:0019825">
    <property type="term" value="F:oxygen binding"/>
    <property type="evidence" value="ECO:0007669"/>
    <property type="project" value="InterPro"/>
</dbReference>
<dbReference type="GO" id="GO:0005344">
    <property type="term" value="F:oxygen carrier activity"/>
    <property type="evidence" value="ECO:0007669"/>
    <property type="project" value="UniProtKB-KW"/>
</dbReference>
<dbReference type="GO" id="GO:0004601">
    <property type="term" value="F:peroxidase activity"/>
    <property type="evidence" value="ECO:0007669"/>
    <property type="project" value="TreeGrafter"/>
</dbReference>
<dbReference type="GO" id="GO:0042744">
    <property type="term" value="P:hydrogen peroxide catabolic process"/>
    <property type="evidence" value="ECO:0007669"/>
    <property type="project" value="TreeGrafter"/>
</dbReference>
<dbReference type="CDD" id="cd08925">
    <property type="entry name" value="Hb-beta-like"/>
    <property type="match status" value="1"/>
</dbReference>
<dbReference type="FunFam" id="1.10.490.10:FF:000001">
    <property type="entry name" value="Hemoglobin subunit beta"/>
    <property type="match status" value="1"/>
</dbReference>
<dbReference type="Gene3D" id="1.10.490.10">
    <property type="entry name" value="Globins"/>
    <property type="match status" value="1"/>
</dbReference>
<dbReference type="InterPro" id="IPR000971">
    <property type="entry name" value="Globin"/>
</dbReference>
<dbReference type="InterPro" id="IPR009050">
    <property type="entry name" value="Globin-like_sf"/>
</dbReference>
<dbReference type="InterPro" id="IPR012292">
    <property type="entry name" value="Globin/Proto"/>
</dbReference>
<dbReference type="InterPro" id="IPR002337">
    <property type="entry name" value="Hemoglobin_b"/>
</dbReference>
<dbReference type="InterPro" id="IPR050056">
    <property type="entry name" value="Hemoglobin_oxygen_transport"/>
</dbReference>
<dbReference type="PANTHER" id="PTHR11442">
    <property type="entry name" value="HEMOGLOBIN FAMILY MEMBER"/>
    <property type="match status" value="1"/>
</dbReference>
<dbReference type="PANTHER" id="PTHR11442:SF7">
    <property type="entry name" value="HEMOGLOBIN SUBUNIT EPSILON"/>
    <property type="match status" value="1"/>
</dbReference>
<dbReference type="Pfam" id="PF00042">
    <property type="entry name" value="Globin"/>
    <property type="match status" value="1"/>
</dbReference>
<dbReference type="PRINTS" id="PR00814">
    <property type="entry name" value="BETAHAEM"/>
</dbReference>
<dbReference type="SUPFAM" id="SSF46458">
    <property type="entry name" value="Globin-like"/>
    <property type="match status" value="1"/>
</dbReference>
<dbReference type="PROSITE" id="PS01033">
    <property type="entry name" value="GLOBIN"/>
    <property type="match status" value="1"/>
</dbReference>
<protein>
    <recommendedName>
        <fullName>Hemoglobin subunit beta-1</fullName>
    </recommendedName>
    <alternativeName>
        <fullName>Beta-1-globin</fullName>
    </alternativeName>
    <alternativeName>
        <fullName>Hemoglobin beta-1 chain</fullName>
    </alternativeName>
</protein>
<name>HBB1_CYGMA</name>
<comment type="function">
    <text>Involved in oxygen transport from gills to the various peripheral tissues.</text>
</comment>
<comment type="subunit">
    <text>Hb1 is a heterotetramer of two alpha chains and two beta-1 chains.</text>
</comment>
<comment type="tissue specificity">
    <text>Red blood cells.</text>
</comment>
<comment type="miscellaneous">
    <text>This fish has two hemoglobins: Hb1 (major) and Hb2 (about 5% of the total). They display the Bohr and root effects.</text>
</comment>
<comment type="similarity">
    <text evidence="1">Belongs to the globin family.</text>
</comment>
<organism>
    <name type="scientific">Cygnodraco mawsoni</name>
    <name type="common">Antarctic dragonfish</name>
    <dbReference type="NCBI Taxonomy" id="8216"/>
    <lineage>
        <taxon>Eukaryota</taxon>
        <taxon>Metazoa</taxon>
        <taxon>Chordata</taxon>
        <taxon>Craniata</taxon>
        <taxon>Vertebrata</taxon>
        <taxon>Euteleostomi</taxon>
        <taxon>Actinopterygii</taxon>
        <taxon>Neopterygii</taxon>
        <taxon>Teleostei</taxon>
        <taxon>Neoteleostei</taxon>
        <taxon>Acanthomorphata</taxon>
        <taxon>Eupercaria</taxon>
        <taxon>Perciformes</taxon>
        <taxon>Notothenioidei</taxon>
        <taxon>Bathydraconidae</taxon>
        <taxon>Cygnodraco</taxon>
    </lineage>
</organism>
<reference key="1">
    <citation type="journal article" date="1998" name="Proc. Natl. Acad. Sci. U.S.A.">
        <title>Antarctic fish hemoglobins: evidence for adaptive evolution at subzero temperature.</title>
        <authorList>
            <person name="Bargelloni L."/>
            <person name="Marcato S."/>
            <person name="Patarnello T."/>
        </authorList>
    </citation>
    <scope>NUCLEOTIDE SEQUENCE [MRNA]</scope>
</reference>
<reference key="2">
    <citation type="journal article" date="1991" name="Biochim. Biophys. Acta">
        <title>The hemoglobins of the cold-adapted Antarctic teleost Cygnodraco mawsoni.</title>
        <authorList>
            <person name="Caruso C."/>
            <person name="Rutigliano B."/>
            <person name="Romano M."/>
            <person name="di Prisco G."/>
        </authorList>
    </citation>
    <scope>PROTEIN SEQUENCE OF 2-147</scope>
</reference>
<gene>
    <name type="primary">hbb1</name>
</gene>
<accession>P23017</accession>
<accession>O93347</accession>
<feature type="initiator methionine" description="Removed" evidence="2">
    <location>
        <position position="1"/>
    </location>
</feature>
<feature type="chain" id="PRO_0000052939" description="Hemoglobin subunit beta-1">
    <location>
        <begin position="2"/>
        <end position="147"/>
    </location>
</feature>
<feature type="domain" description="Globin" evidence="1">
    <location>
        <begin position="3"/>
        <end position="147"/>
    </location>
</feature>
<feature type="binding site" description="distal binding residue">
    <location>
        <position position="64"/>
    </location>
    <ligand>
        <name>heme b</name>
        <dbReference type="ChEBI" id="CHEBI:60344"/>
    </ligand>
    <ligandPart>
        <name>Fe</name>
        <dbReference type="ChEBI" id="CHEBI:18248"/>
    </ligandPart>
</feature>
<feature type="binding site" description="proximal binding residue">
    <location>
        <position position="93"/>
    </location>
    <ligand>
        <name>heme b</name>
        <dbReference type="ChEBI" id="CHEBI:60344"/>
    </ligand>
    <ligandPart>
        <name>Fe</name>
        <dbReference type="ChEBI" id="CHEBI:18248"/>
    </ligandPart>
</feature>
<feature type="sequence conflict" description="In Ref. 1; AAC41384." evidence="3" ref="1">
    <original>M</original>
    <variation>L</variation>
    <location>
        <position position="135"/>
    </location>
</feature>
<proteinExistence type="evidence at protein level"/>
<evidence type="ECO:0000255" key="1">
    <source>
        <dbReference type="PROSITE-ProRule" id="PRU00238"/>
    </source>
</evidence>
<evidence type="ECO:0000269" key="2">
    <source>
    </source>
</evidence>
<evidence type="ECO:0000305" key="3"/>
<sequence>MVKWSKTELTIINDIFSHLDYDDIGPKALSRCLIVYPWTQRHFSGFGNLYNAEAIIGNANVAAHGIKVLHGLDRGLKNMDNIVDAYAELSTLHSEKLHVDPDNFKLLSDCITIVLAAKLGKAFTAETQAAFQKFMAVVVSALGKQYH</sequence>